<sequence length="100" mass="11324">MKISEEEVRHVANLSKLRFSDQETKEFASSLSKIVDMIELLNEVDTEGVPVTTTMADRKTVMREDIAQPGNNRDDLFKNVPQHQDYYIKVPAILEDGGDA</sequence>
<keyword id="KW-0067">ATP-binding</keyword>
<keyword id="KW-0436">Ligase</keyword>
<keyword id="KW-0547">Nucleotide-binding</keyword>
<keyword id="KW-0648">Protein biosynthesis</keyword>
<reference key="1">
    <citation type="journal article" date="2002" name="Mol. Microbiol.">
        <title>Genome sequence of Streptococcus agalactiae, a pathogen causing invasive neonatal disease.</title>
        <authorList>
            <person name="Glaser P."/>
            <person name="Rusniok C."/>
            <person name="Buchrieser C."/>
            <person name="Chevalier F."/>
            <person name="Frangeul L."/>
            <person name="Msadek T."/>
            <person name="Zouine M."/>
            <person name="Couve E."/>
            <person name="Lalioui L."/>
            <person name="Poyart C."/>
            <person name="Trieu-Cuot P."/>
            <person name="Kunst F."/>
        </authorList>
    </citation>
    <scope>NUCLEOTIDE SEQUENCE [LARGE SCALE GENOMIC DNA]</scope>
    <source>
        <strain>NEM316</strain>
    </source>
</reference>
<organism>
    <name type="scientific">Streptococcus agalactiae serotype III (strain NEM316)</name>
    <dbReference type="NCBI Taxonomy" id="211110"/>
    <lineage>
        <taxon>Bacteria</taxon>
        <taxon>Bacillati</taxon>
        <taxon>Bacillota</taxon>
        <taxon>Bacilli</taxon>
        <taxon>Lactobacillales</taxon>
        <taxon>Streptococcaceae</taxon>
        <taxon>Streptococcus</taxon>
    </lineage>
</organism>
<feature type="chain" id="PRO_0000105338" description="Aspartyl/glutamyl-tRNA(Asn/Gln) amidotransferase subunit C">
    <location>
        <begin position="1"/>
        <end position="100"/>
    </location>
</feature>
<proteinExistence type="inferred from homology"/>
<accession>Q8E3P3</accession>
<dbReference type="EC" id="6.3.5.-" evidence="1"/>
<dbReference type="EMBL" id="AL766852">
    <property type="protein sequence ID" value="CAD47372.1"/>
    <property type="molecule type" value="Genomic_DNA"/>
</dbReference>
<dbReference type="RefSeq" id="WP_000703033.1">
    <property type="nucleotide sequence ID" value="NC_004368.1"/>
</dbReference>
<dbReference type="SMR" id="Q8E3P3"/>
<dbReference type="KEGG" id="san:gbs1713"/>
<dbReference type="eggNOG" id="COG0721">
    <property type="taxonomic scope" value="Bacteria"/>
</dbReference>
<dbReference type="HOGENOM" id="CLU_105899_1_2_9"/>
<dbReference type="Proteomes" id="UP000000823">
    <property type="component" value="Chromosome"/>
</dbReference>
<dbReference type="GO" id="GO:0050566">
    <property type="term" value="F:asparaginyl-tRNA synthase (glutamine-hydrolyzing) activity"/>
    <property type="evidence" value="ECO:0007669"/>
    <property type="project" value="RHEA"/>
</dbReference>
<dbReference type="GO" id="GO:0005524">
    <property type="term" value="F:ATP binding"/>
    <property type="evidence" value="ECO:0007669"/>
    <property type="project" value="UniProtKB-KW"/>
</dbReference>
<dbReference type="GO" id="GO:0050567">
    <property type="term" value="F:glutaminyl-tRNA synthase (glutamine-hydrolyzing) activity"/>
    <property type="evidence" value="ECO:0007669"/>
    <property type="project" value="UniProtKB-UniRule"/>
</dbReference>
<dbReference type="GO" id="GO:0070681">
    <property type="term" value="P:glutaminyl-tRNAGln biosynthesis via transamidation"/>
    <property type="evidence" value="ECO:0007669"/>
    <property type="project" value="TreeGrafter"/>
</dbReference>
<dbReference type="GO" id="GO:0006450">
    <property type="term" value="P:regulation of translational fidelity"/>
    <property type="evidence" value="ECO:0007669"/>
    <property type="project" value="InterPro"/>
</dbReference>
<dbReference type="GO" id="GO:0006412">
    <property type="term" value="P:translation"/>
    <property type="evidence" value="ECO:0007669"/>
    <property type="project" value="UniProtKB-UniRule"/>
</dbReference>
<dbReference type="Gene3D" id="1.10.20.60">
    <property type="entry name" value="Glu-tRNAGln amidotransferase C subunit, N-terminal domain"/>
    <property type="match status" value="1"/>
</dbReference>
<dbReference type="HAMAP" id="MF_00122">
    <property type="entry name" value="GatC"/>
    <property type="match status" value="1"/>
</dbReference>
<dbReference type="InterPro" id="IPR036113">
    <property type="entry name" value="Asp/Glu-ADT_sf_sub_c"/>
</dbReference>
<dbReference type="InterPro" id="IPR003837">
    <property type="entry name" value="GatC"/>
</dbReference>
<dbReference type="NCBIfam" id="TIGR00135">
    <property type="entry name" value="gatC"/>
    <property type="match status" value="1"/>
</dbReference>
<dbReference type="PANTHER" id="PTHR15004">
    <property type="entry name" value="GLUTAMYL-TRNA(GLN) AMIDOTRANSFERASE SUBUNIT C, MITOCHONDRIAL"/>
    <property type="match status" value="1"/>
</dbReference>
<dbReference type="PANTHER" id="PTHR15004:SF0">
    <property type="entry name" value="GLUTAMYL-TRNA(GLN) AMIDOTRANSFERASE SUBUNIT C, MITOCHONDRIAL"/>
    <property type="match status" value="1"/>
</dbReference>
<dbReference type="Pfam" id="PF02686">
    <property type="entry name" value="GatC"/>
    <property type="match status" value="1"/>
</dbReference>
<dbReference type="SUPFAM" id="SSF141000">
    <property type="entry name" value="Glu-tRNAGln amidotransferase C subunit"/>
    <property type="match status" value="1"/>
</dbReference>
<protein>
    <recommendedName>
        <fullName evidence="1">Aspartyl/glutamyl-tRNA(Asn/Gln) amidotransferase subunit C</fullName>
        <shortName evidence="1">Asp/Glu-ADT subunit C</shortName>
        <ecNumber evidence="1">6.3.5.-</ecNumber>
    </recommendedName>
</protein>
<gene>
    <name evidence="1" type="primary">gatC</name>
    <name type="ordered locus">gbs1713</name>
</gene>
<comment type="function">
    <text evidence="1">Allows the formation of correctly charged Asn-tRNA(Asn) or Gln-tRNA(Gln) through the transamidation of misacylated Asp-tRNA(Asn) or Glu-tRNA(Gln) in organisms which lack either or both of asparaginyl-tRNA or glutaminyl-tRNA synthetases. The reaction takes place in the presence of glutamine and ATP through an activated phospho-Asp-tRNA(Asn) or phospho-Glu-tRNA(Gln).</text>
</comment>
<comment type="catalytic activity">
    <reaction evidence="1">
        <text>L-glutamyl-tRNA(Gln) + L-glutamine + ATP + H2O = L-glutaminyl-tRNA(Gln) + L-glutamate + ADP + phosphate + H(+)</text>
        <dbReference type="Rhea" id="RHEA:17521"/>
        <dbReference type="Rhea" id="RHEA-COMP:9681"/>
        <dbReference type="Rhea" id="RHEA-COMP:9684"/>
        <dbReference type="ChEBI" id="CHEBI:15377"/>
        <dbReference type="ChEBI" id="CHEBI:15378"/>
        <dbReference type="ChEBI" id="CHEBI:29985"/>
        <dbReference type="ChEBI" id="CHEBI:30616"/>
        <dbReference type="ChEBI" id="CHEBI:43474"/>
        <dbReference type="ChEBI" id="CHEBI:58359"/>
        <dbReference type="ChEBI" id="CHEBI:78520"/>
        <dbReference type="ChEBI" id="CHEBI:78521"/>
        <dbReference type="ChEBI" id="CHEBI:456216"/>
    </reaction>
</comment>
<comment type="catalytic activity">
    <reaction evidence="1">
        <text>L-aspartyl-tRNA(Asn) + L-glutamine + ATP + H2O = L-asparaginyl-tRNA(Asn) + L-glutamate + ADP + phosphate + 2 H(+)</text>
        <dbReference type="Rhea" id="RHEA:14513"/>
        <dbReference type="Rhea" id="RHEA-COMP:9674"/>
        <dbReference type="Rhea" id="RHEA-COMP:9677"/>
        <dbReference type="ChEBI" id="CHEBI:15377"/>
        <dbReference type="ChEBI" id="CHEBI:15378"/>
        <dbReference type="ChEBI" id="CHEBI:29985"/>
        <dbReference type="ChEBI" id="CHEBI:30616"/>
        <dbReference type="ChEBI" id="CHEBI:43474"/>
        <dbReference type="ChEBI" id="CHEBI:58359"/>
        <dbReference type="ChEBI" id="CHEBI:78515"/>
        <dbReference type="ChEBI" id="CHEBI:78516"/>
        <dbReference type="ChEBI" id="CHEBI:456216"/>
    </reaction>
</comment>
<comment type="subunit">
    <text evidence="1">Heterotrimer of A, B and C subunits.</text>
</comment>
<comment type="similarity">
    <text evidence="1">Belongs to the GatC family.</text>
</comment>
<name>GATC_STRA3</name>
<evidence type="ECO:0000255" key="1">
    <source>
        <dbReference type="HAMAP-Rule" id="MF_00122"/>
    </source>
</evidence>